<keyword id="KW-0119">Carbohydrate metabolism</keyword>
<keyword id="KW-0963">Cytoplasm</keyword>
<keyword id="KW-0413">Isomerase</keyword>
<keyword id="KW-0460">Magnesium</keyword>
<keyword id="KW-0479">Metal-binding</keyword>
<keyword id="KW-0859">Xylose metabolism</keyword>
<organism>
    <name type="scientific">Haemophilus influenzae (strain 86-028NP)</name>
    <dbReference type="NCBI Taxonomy" id="281310"/>
    <lineage>
        <taxon>Bacteria</taxon>
        <taxon>Pseudomonadati</taxon>
        <taxon>Pseudomonadota</taxon>
        <taxon>Gammaproteobacteria</taxon>
        <taxon>Pasteurellales</taxon>
        <taxon>Pasteurellaceae</taxon>
        <taxon>Haemophilus</taxon>
    </lineage>
</organism>
<sequence>MTTYFDKIEKISFEGEKSTNPFAFKHYDANQVILGKTMAEHLRLAVCYWHTFCWNGNDMFGLGSLERSWQKNPNVLAGAEQKADIAFEFLNKLGVPYYCFHDVDIAPEGNSVREYVQNFHHIVDILERKQVETGVKLLWGTANCFTNPRYMSGAATNPNPEVFAWAATQVFNAMNATQRLGGENYVLWGGREGYETLLNTDLKREREQIGRFMQMVVEHKHKIGFKGTLLIEPKPQEPTKHQYDYDVATVYGFLKQFGLEKEIKVNIEANHATLAGHTFQHEIATACALDIFGSIDANRGDPQLGWDTDQFPNSVEENTLVMYEILKHGGFTTGGFNFDAKIRRQSIDPYDLFYAHIGAIDVLALSLKRAAKMLQEKTLQKIVNARYAGWNSELGQHILQGKTSLETLAQLVQQKDLAPKPVSGQQEYLENLVNQVIYS</sequence>
<accession>Q4QLI2</accession>
<evidence type="ECO:0000255" key="1">
    <source>
        <dbReference type="HAMAP-Rule" id="MF_00455"/>
    </source>
</evidence>
<feature type="chain" id="PRO_0000236963" description="Xylose isomerase">
    <location>
        <begin position="1"/>
        <end position="439"/>
    </location>
</feature>
<feature type="active site" evidence="1">
    <location>
        <position position="101"/>
    </location>
</feature>
<feature type="active site" evidence="1">
    <location>
        <position position="104"/>
    </location>
</feature>
<feature type="binding site" evidence="1">
    <location>
        <position position="232"/>
    </location>
    <ligand>
        <name>Mg(2+)</name>
        <dbReference type="ChEBI" id="CHEBI:18420"/>
        <label>1</label>
    </ligand>
</feature>
<feature type="binding site" evidence="1">
    <location>
        <position position="268"/>
    </location>
    <ligand>
        <name>Mg(2+)</name>
        <dbReference type="ChEBI" id="CHEBI:18420"/>
        <label>1</label>
    </ligand>
</feature>
<feature type="binding site" evidence="1">
    <location>
        <position position="268"/>
    </location>
    <ligand>
        <name>Mg(2+)</name>
        <dbReference type="ChEBI" id="CHEBI:18420"/>
        <label>2</label>
    </ligand>
</feature>
<feature type="binding site" evidence="1">
    <location>
        <position position="271"/>
    </location>
    <ligand>
        <name>Mg(2+)</name>
        <dbReference type="ChEBI" id="CHEBI:18420"/>
        <label>2</label>
    </ligand>
</feature>
<feature type="binding site" evidence="1">
    <location>
        <position position="296"/>
    </location>
    <ligand>
        <name>Mg(2+)</name>
        <dbReference type="ChEBI" id="CHEBI:18420"/>
        <label>1</label>
    </ligand>
</feature>
<feature type="binding site" evidence="1">
    <location>
        <position position="307"/>
    </location>
    <ligand>
        <name>Mg(2+)</name>
        <dbReference type="ChEBI" id="CHEBI:18420"/>
        <label>2</label>
    </ligand>
</feature>
<feature type="binding site" evidence="1">
    <location>
        <position position="309"/>
    </location>
    <ligand>
        <name>Mg(2+)</name>
        <dbReference type="ChEBI" id="CHEBI:18420"/>
        <label>2</label>
    </ligand>
</feature>
<feature type="binding site" evidence="1">
    <location>
        <position position="339"/>
    </location>
    <ligand>
        <name>Mg(2+)</name>
        <dbReference type="ChEBI" id="CHEBI:18420"/>
        <label>1</label>
    </ligand>
</feature>
<name>XYLA_HAEI8</name>
<dbReference type="EC" id="5.3.1.5" evidence="1"/>
<dbReference type="EMBL" id="CP000057">
    <property type="protein sequence ID" value="AAX88115.1"/>
    <property type="molecule type" value="Genomic_DNA"/>
</dbReference>
<dbReference type="RefSeq" id="WP_005690713.1">
    <property type="nucleotide sequence ID" value="NC_007146.2"/>
</dbReference>
<dbReference type="SMR" id="Q4QLI2"/>
<dbReference type="GeneID" id="93220119"/>
<dbReference type="KEGG" id="hit:NTHI1276"/>
<dbReference type="HOGENOM" id="CLU_037261_1_0_6"/>
<dbReference type="Proteomes" id="UP000002525">
    <property type="component" value="Chromosome"/>
</dbReference>
<dbReference type="GO" id="GO:0005737">
    <property type="term" value="C:cytoplasm"/>
    <property type="evidence" value="ECO:0007669"/>
    <property type="project" value="UniProtKB-SubCell"/>
</dbReference>
<dbReference type="GO" id="GO:0000287">
    <property type="term" value="F:magnesium ion binding"/>
    <property type="evidence" value="ECO:0007669"/>
    <property type="project" value="UniProtKB-UniRule"/>
</dbReference>
<dbReference type="GO" id="GO:0009045">
    <property type="term" value="F:xylose isomerase activity"/>
    <property type="evidence" value="ECO:0007669"/>
    <property type="project" value="UniProtKB-UniRule"/>
</dbReference>
<dbReference type="GO" id="GO:0042732">
    <property type="term" value="P:D-xylose metabolic process"/>
    <property type="evidence" value="ECO:0007669"/>
    <property type="project" value="UniProtKB-UniRule"/>
</dbReference>
<dbReference type="FunFam" id="3.20.20.150:FF:000002">
    <property type="entry name" value="Xylose isomerase"/>
    <property type="match status" value="1"/>
</dbReference>
<dbReference type="Gene3D" id="3.20.20.150">
    <property type="entry name" value="Divalent-metal-dependent TIM barrel enzymes"/>
    <property type="match status" value="1"/>
</dbReference>
<dbReference type="HAMAP" id="MF_00455">
    <property type="entry name" value="Xylose_isom_A"/>
    <property type="match status" value="1"/>
</dbReference>
<dbReference type="InterPro" id="IPR036237">
    <property type="entry name" value="Xyl_isomerase-like_sf"/>
</dbReference>
<dbReference type="InterPro" id="IPR013452">
    <property type="entry name" value="Xylose_isom_bac"/>
</dbReference>
<dbReference type="InterPro" id="IPR001998">
    <property type="entry name" value="Xylose_isomerase"/>
</dbReference>
<dbReference type="NCBIfam" id="NF003998">
    <property type="entry name" value="PRK05474.1"/>
    <property type="match status" value="1"/>
</dbReference>
<dbReference type="NCBIfam" id="TIGR02630">
    <property type="entry name" value="xylose_isom_A"/>
    <property type="match status" value="1"/>
</dbReference>
<dbReference type="PANTHER" id="PTHR48408">
    <property type="match status" value="1"/>
</dbReference>
<dbReference type="PANTHER" id="PTHR48408:SF1">
    <property type="entry name" value="XYLOSE ISOMERASE"/>
    <property type="match status" value="1"/>
</dbReference>
<dbReference type="PRINTS" id="PR00688">
    <property type="entry name" value="XYLOSISMRASE"/>
</dbReference>
<dbReference type="SUPFAM" id="SSF51658">
    <property type="entry name" value="Xylose isomerase-like"/>
    <property type="match status" value="1"/>
</dbReference>
<dbReference type="PROSITE" id="PS51415">
    <property type="entry name" value="XYLOSE_ISOMERASE"/>
    <property type="match status" value="1"/>
</dbReference>
<protein>
    <recommendedName>
        <fullName evidence="1">Xylose isomerase</fullName>
        <ecNumber evidence="1">5.3.1.5</ecNumber>
    </recommendedName>
</protein>
<reference key="1">
    <citation type="journal article" date="2005" name="J. Bacteriol.">
        <title>Genomic sequence of an otitis media isolate of nontypeable Haemophilus influenzae: comparative study with H. influenzae serotype d, strain KW20.</title>
        <authorList>
            <person name="Harrison A."/>
            <person name="Dyer D.W."/>
            <person name="Gillaspy A."/>
            <person name="Ray W.C."/>
            <person name="Mungur R."/>
            <person name="Carson M.B."/>
            <person name="Zhong H."/>
            <person name="Gipson J."/>
            <person name="Gipson M."/>
            <person name="Johnson L.S."/>
            <person name="Lewis L."/>
            <person name="Bakaletz L.O."/>
            <person name="Munson R.S. Jr."/>
        </authorList>
    </citation>
    <scope>NUCLEOTIDE SEQUENCE [LARGE SCALE GENOMIC DNA]</scope>
    <source>
        <strain>86-028NP</strain>
    </source>
</reference>
<comment type="catalytic activity">
    <reaction evidence="1">
        <text>alpha-D-xylose = alpha-D-xylulofuranose</text>
        <dbReference type="Rhea" id="RHEA:22816"/>
        <dbReference type="ChEBI" id="CHEBI:28518"/>
        <dbReference type="ChEBI" id="CHEBI:188998"/>
        <dbReference type="EC" id="5.3.1.5"/>
    </reaction>
</comment>
<comment type="cofactor">
    <cofactor evidence="1">
        <name>Mg(2+)</name>
        <dbReference type="ChEBI" id="CHEBI:18420"/>
    </cofactor>
    <text evidence="1">Binds 2 magnesium ions per subunit.</text>
</comment>
<comment type="subunit">
    <text evidence="1">Homotetramer.</text>
</comment>
<comment type="subcellular location">
    <subcellularLocation>
        <location evidence="1">Cytoplasm</location>
    </subcellularLocation>
</comment>
<comment type="similarity">
    <text evidence="1">Belongs to the xylose isomerase family.</text>
</comment>
<proteinExistence type="inferred from homology"/>
<gene>
    <name evidence="1" type="primary">xylA</name>
    <name type="ordered locus">NTHI1276</name>
</gene>